<protein>
    <recommendedName>
        <fullName evidence="5">Coiled-coil domain-containing protein 70</fullName>
    </recommendedName>
</protein>
<organism>
    <name type="scientific">Homo sapiens</name>
    <name type="common">Human</name>
    <dbReference type="NCBI Taxonomy" id="9606"/>
    <lineage>
        <taxon>Eukaryota</taxon>
        <taxon>Metazoa</taxon>
        <taxon>Chordata</taxon>
        <taxon>Craniata</taxon>
        <taxon>Vertebrata</taxon>
        <taxon>Euteleostomi</taxon>
        <taxon>Mammalia</taxon>
        <taxon>Eutheria</taxon>
        <taxon>Euarchontoglires</taxon>
        <taxon>Primates</taxon>
        <taxon>Haplorrhini</taxon>
        <taxon>Catarrhini</taxon>
        <taxon>Hominidae</taxon>
        <taxon>Homo</taxon>
    </lineage>
</organism>
<keyword id="KW-0175">Coiled coil</keyword>
<keyword id="KW-1185">Reference proteome</keyword>
<keyword id="KW-0809">Transit peptide</keyword>
<name>CCD70_HUMAN</name>
<dbReference type="EMBL" id="AL136887">
    <property type="protein sequence ID" value="CAB66821.1"/>
    <property type="molecule type" value="mRNA"/>
</dbReference>
<dbReference type="EMBL" id="AK098719">
    <property type="protein sequence ID" value="BAC05391.1"/>
    <property type="molecule type" value="mRNA"/>
</dbReference>
<dbReference type="EMBL" id="AL162377">
    <property type="status" value="NOT_ANNOTATED_CDS"/>
    <property type="molecule type" value="Genomic_DNA"/>
</dbReference>
<dbReference type="EMBL" id="BC069691">
    <property type="protein sequence ID" value="AAH69691.1"/>
    <property type="molecule type" value="mRNA"/>
</dbReference>
<dbReference type="EMBL" id="BC069748">
    <property type="protein sequence ID" value="AAH69748.1"/>
    <property type="molecule type" value="mRNA"/>
</dbReference>
<dbReference type="EMBL" id="BC069770">
    <property type="protein sequence ID" value="AAH69770.1"/>
    <property type="molecule type" value="mRNA"/>
</dbReference>
<dbReference type="EMBL" id="BC069806">
    <property type="protein sequence ID" value="AAH69806.1"/>
    <property type="molecule type" value="mRNA"/>
</dbReference>
<dbReference type="CCDS" id="CCDS9431.2"/>
<dbReference type="RefSeq" id="NP_001333004.2">
    <property type="nucleotide sequence ID" value="NM_001346075.2"/>
</dbReference>
<dbReference type="RefSeq" id="NP_112580.3">
    <property type="nucleotide sequence ID" value="NM_031290.4"/>
</dbReference>
<dbReference type="SMR" id="Q6NSX1"/>
<dbReference type="BioGRID" id="123648">
    <property type="interactions" value="18"/>
</dbReference>
<dbReference type="FunCoup" id="Q6NSX1">
    <property type="interactions" value="7"/>
</dbReference>
<dbReference type="IntAct" id="Q6NSX1">
    <property type="interactions" value="16"/>
</dbReference>
<dbReference type="STRING" id="9606.ENSP00000242819"/>
<dbReference type="PhosphoSitePlus" id="Q6NSX1"/>
<dbReference type="BioMuta" id="CCDC70"/>
<dbReference type="MassIVE" id="Q6NSX1"/>
<dbReference type="PaxDb" id="9606-ENSP00000242819"/>
<dbReference type="PeptideAtlas" id="Q6NSX1"/>
<dbReference type="Antibodypedia" id="42328">
    <property type="antibodies" value="67 antibodies from 18 providers"/>
</dbReference>
<dbReference type="DNASU" id="83446"/>
<dbReference type="Ensembl" id="ENST00000242819.7">
    <property type="protein sequence ID" value="ENSP00000242819.5"/>
    <property type="gene ID" value="ENSG00000123171.8"/>
</dbReference>
<dbReference type="GeneID" id="83446"/>
<dbReference type="KEGG" id="hsa:83446"/>
<dbReference type="MANE-Select" id="ENST00000242819.7">
    <property type="protein sequence ID" value="ENSP00000242819.5"/>
    <property type="RefSeq nucleotide sequence ID" value="NM_031290.4"/>
    <property type="RefSeq protein sequence ID" value="NP_112580.3"/>
</dbReference>
<dbReference type="UCSC" id="uc001vfu.5">
    <property type="organism name" value="human"/>
</dbReference>
<dbReference type="AGR" id="HGNC:25303"/>
<dbReference type="CTD" id="83446"/>
<dbReference type="GeneCards" id="CCDC70"/>
<dbReference type="HGNC" id="HGNC:25303">
    <property type="gene designation" value="CCDC70"/>
</dbReference>
<dbReference type="HPA" id="ENSG00000123171">
    <property type="expression patterns" value="Tissue enriched (testis)"/>
</dbReference>
<dbReference type="neXtProt" id="NX_Q6NSX1"/>
<dbReference type="OpenTargets" id="ENSG00000123171"/>
<dbReference type="PharmGKB" id="PA143485421"/>
<dbReference type="VEuPathDB" id="HostDB:ENSG00000123171"/>
<dbReference type="eggNOG" id="ENOG502S3RY">
    <property type="taxonomic scope" value="Eukaryota"/>
</dbReference>
<dbReference type="GeneTree" id="ENSGT00940000153137"/>
<dbReference type="HOGENOM" id="CLU_1293990_0_0_1"/>
<dbReference type="InParanoid" id="Q6NSX1"/>
<dbReference type="OMA" id="FREEMWN"/>
<dbReference type="OrthoDB" id="76453at2759"/>
<dbReference type="PAN-GO" id="Q6NSX1">
    <property type="GO annotations" value="0 GO annotations based on evolutionary models"/>
</dbReference>
<dbReference type="PhylomeDB" id="Q6NSX1"/>
<dbReference type="TreeFam" id="TF336984"/>
<dbReference type="PathwayCommons" id="Q6NSX1"/>
<dbReference type="SignaLink" id="Q6NSX1"/>
<dbReference type="BioGRID-ORCS" id="83446">
    <property type="hits" value="5 hits in 1146 CRISPR screens"/>
</dbReference>
<dbReference type="GeneWiki" id="CCDC70"/>
<dbReference type="GenomeRNAi" id="83446"/>
<dbReference type="Pharos" id="Q6NSX1">
    <property type="development level" value="Tdark"/>
</dbReference>
<dbReference type="PRO" id="PR:Q6NSX1"/>
<dbReference type="Proteomes" id="UP000005640">
    <property type="component" value="Chromosome 13"/>
</dbReference>
<dbReference type="RNAct" id="Q6NSX1">
    <property type="molecule type" value="protein"/>
</dbReference>
<dbReference type="Bgee" id="ENSG00000123171">
    <property type="expression patterns" value="Expressed in left testis and 45 other cell types or tissues"/>
</dbReference>
<dbReference type="GO" id="GO:0005886">
    <property type="term" value="C:plasma membrane"/>
    <property type="evidence" value="ECO:0000314"/>
    <property type="project" value="LIFEdb"/>
</dbReference>
<evidence type="ECO:0000255" key="1"/>
<evidence type="ECO:0000269" key="2">
    <source>
    </source>
</evidence>
<evidence type="ECO:0000269" key="3">
    <source>
    </source>
</evidence>
<evidence type="ECO:0000269" key="4">
    <source>
    </source>
</evidence>
<evidence type="ECO:0000305" key="5"/>
<evidence type="ECO:0000312" key="6">
    <source>
        <dbReference type="HGNC" id="HGNC:25303"/>
    </source>
</evidence>
<reference key="1">
    <citation type="journal article" date="2001" name="Genome Res.">
        <title>Towards a catalog of human genes and proteins: sequencing and analysis of 500 novel complete protein coding human cDNAs.</title>
        <authorList>
            <person name="Wiemann S."/>
            <person name="Weil B."/>
            <person name="Wellenreuther R."/>
            <person name="Gassenhuber J."/>
            <person name="Glassl S."/>
            <person name="Ansorge W."/>
            <person name="Boecher M."/>
            <person name="Bloecker H."/>
            <person name="Bauersachs S."/>
            <person name="Blum H."/>
            <person name="Lauber J."/>
            <person name="Duesterhoeft A."/>
            <person name="Beyer A."/>
            <person name="Koehrer K."/>
            <person name="Strack N."/>
            <person name="Mewes H.-W."/>
            <person name="Ottenwaelder B."/>
            <person name="Obermaier B."/>
            <person name="Tampe J."/>
            <person name="Heubner D."/>
            <person name="Wambutt R."/>
            <person name="Korn B."/>
            <person name="Klein M."/>
            <person name="Poustka A."/>
        </authorList>
    </citation>
    <scope>NUCLEOTIDE SEQUENCE [LARGE SCALE MRNA]</scope>
    <scope>VARIANT VAL-195</scope>
    <source>
        <tissue>Testis</tissue>
    </source>
</reference>
<reference key="2">
    <citation type="journal article" date="2004" name="Nat. Genet.">
        <title>Complete sequencing and characterization of 21,243 full-length human cDNAs.</title>
        <authorList>
            <person name="Ota T."/>
            <person name="Suzuki Y."/>
            <person name="Nishikawa T."/>
            <person name="Otsuki T."/>
            <person name="Sugiyama T."/>
            <person name="Irie R."/>
            <person name="Wakamatsu A."/>
            <person name="Hayashi K."/>
            <person name="Sato H."/>
            <person name="Nagai K."/>
            <person name="Kimura K."/>
            <person name="Makita H."/>
            <person name="Sekine M."/>
            <person name="Obayashi M."/>
            <person name="Nishi T."/>
            <person name="Shibahara T."/>
            <person name="Tanaka T."/>
            <person name="Ishii S."/>
            <person name="Yamamoto J."/>
            <person name="Saito K."/>
            <person name="Kawai Y."/>
            <person name="Isono Y."/>
            <person name="Nakamura Y."/>
            <person name="Nagahari K."/>
            <person name="Murakami K."/>
            <person name="Yasuda T."/>
            <person name="Iwayanagi T."/>
            <person name="Wagatsuma M."/>
            <person name="Shiratori A."/>
            <person name="Sudo H."/>
            <person name="Hosoiri T."/>
            <person name="Kaku Y."/>
            <person name="Kodaira H."/>
            <person name="Kondo H."/>
            <person name="Sugawara M."/>
            <person name="Takahashi M."/>
            <person name="Kanda K."/>
            <person name="Yokoi T."/>
            <person name="Furuya T."/>
            <person name="Kikkawa E."/>
            <person name="Omura Y."/>
            <person name="Abe K."/>
            <person name="Kamihara K."/>
            <person name="Katsuta N."/>
            <person name="Sato K."/>
            <person name="Tanikawa M."/>
            <person name="Yamazaki M."/>
            <person name="Ninomiya K."/>
            <person name="Ishibashi T."/>
            <person name="Yamashita H."/>
            <person name="Murakawa K."/>
            <person name="Fujimori K."/>
            <person name="Tanai H."/>
            <person name="Kimata M."/>
            <person name="Watanabe M."/>
            <person name="Hiraoka S."/>
            <person name="Chiba Y."/>
            <person name="Ishida S."/>
            <person name="Ono Y."/>
            <person name="Takiguchi S."/>
            <person name="Watanabe S."/>
            <person name="Yosida M."/>
            <person name="Hotuta T."/>
            <person name="Kusano J."/>
            <person name="Kanehori K."/>
            <person name="Takahashi-Fujii A."/>
            <person name="Hara H."/>
            <person name="Tanase T.-O."/>
            <person name="Nomura Y."/>
            <person name="Togiya S."/>
            <person name="Komai F."/>
            <person name="Hara R."/>
            <person name="Takeuchi K."/>
            <person name="Arita M."/>
            <person name="Imose N."/>
            <person name="Musashino K."/>
            <person name="Yuuki H."/>
            <person name="Oshima A."/>
            <person name="Sasaki N."/>
            <person name="Aotsuka S."/>
            <person name="Yoshikawa Y."/>
            <person name="Matsunawa H."/>
            <person name="Ichihara T."/>
            <person name="Shiohata N."/>
            <person name="Sano S."/>
            <person name="Moriya S."/>
            <person name="Momiyama H."/>
            <person name="Satoh N."/>
            <person name="Takami S."/>
            <person name="Terashima Y."/>
            <person name="Suzuki O."/>
            <person name="Nakagawa S."/>
            <person name="Senoh A."/>
            <person name="Mizoguchi H."/>
            <person name="Goto Y."/>
            <person name="Shimizu F."/>
            <person name="Wakebe H."/>
            <person name="Hishigaki H."/>
            <person name="Watanabe T."/>
            <person name="Sugiyama A."/>
            <person name="Takemoto M."/>
            <person name="Kawakami B."/>
            <person name="Yamazaki M."/>
            <person name="Watanabe K."/>
            <person name="Kumagai A."/>
            <person name="Itakura S."/>
            <person name="Fukuzumi Y."/>
            <person name="Fujimori Y."/>
            <person name="Komiyama M."/>
            <person name="Tashiro H."/>
            <person name="Tanigami A."/>
            <person name="Fujiwara T."/>
            <person name="Ono T."/>
            <person name="Yamada K."/>
            <person name="Fujii Y."/>
            <person name="Ozaki K."/>
            <person name="Hirao M."/>
            <person name="Ohmori Y."/>
            <person name="Kawabata A."/>
            <person name="Hikiji T."/>
            <person name="Kobatake N."/>
            <person name="Inagaki H."/>
            <person name="Ikema Y."/>
            <person name="Okamoto S."/>
            <person name="Okitani R."/>
            <person name="Kawakami T."/>
            <person name="Noguchi S."/>
            <person name="Itoh T."/>
            <person name="Shigeta K."/>
            <person name="Senba T."/>
            <person name="Matsumura K."/>
            <person name="Nakajima Y."/>
            <person name="Mizuno T."/>
            <person name="Morinaga M."/>
            <person name="Sasaki M."/>
            <person name="Togashi T."/>
            <person name="Oyama M."/>
            <person name="Hata H."/>
            <person name="Watanabe M."/>
            <person name="Komatsu T."/>
            <person name="Mizushima-Sugano J."/>
            <person name="Satoh T."/>
            <person name="Shirai Y."/>
            <person name="Takahashi Y."/>
            <person name="Nakagawa K."/>
            <person name="Okumura K."/>
            <person name="Nagase T."/>
            <person name="Nomura N."/>
            <person name="Kikuchi H."/>
            <person name="Masuho Y."/>
            <person name="Yamashita R."/>
            <person name="Nakai K."/>
            <person name="Yada T."/>
            <person name="Nakamura Y."/>
            <person name="Ohara O."/>
            <person name="Isogai T."/>
            <person name="Sugano S."/>
        </authorList>
    </citation>
    <scope>NUCLEOTIDE SEQUENCE [LARGE SCALE MRNA]</scope>
    <scope>VARIANT VAL-195</scope>
    <source>
        <tissue>Testis</tissue>
    </source>
</reference>
<reference key="3">
    <citation type="journal article" date="2004" name="Nature">
        <title>The DNA sequence and analysis of human chromosome 13.</title>
        <authorList>
            <person name="Dunham A."/>
            <person name="Matthews L.H."/>
            <person name="Burton J."/>
            <person name="Ashurst J.L."/>
            <person name="Howe K.L."/>
            <person name="Ashcroft K.J."/>
            <person name="Beare D.M."/>
            <person name="Burford D.C."/>
            <person name="Hunt S.E."/>
            <person name="Griffiths-Jones S."/>
            <person name="Jones M.C."/>
            <person name="Keenan S.J."/>
            <person name="Oliver K."/>
            <person name="Scott C.E."/>
            <person name="Ainscough R."/>
            <person name="Almeida J.P."/>
            <person name="Ambrose K.D."/>
            <person name="Andrews D.T."/>
            <person name="Ashwell R.I.S."/>
            <person name="Babbage A.K."/>
            <person name="Bagguley C.L."/>
            <person name="Bailey J."/>
            <person name="Bannerjee R."/>
            <person name="Barlow K.F."/>
            <person name="Bates K."/>
            <person name="Beasley H."/>
            <person name="Bird C.P."/>
            <person name="Bray-Allen S."/>
            <person name="Brown A.J."/>
            <person name="Brown J.Y."/>
            <person name="Burrill W."/>
            <person name="Carder C."/>
            <person name="Carter N.P."/>
            <person name="Chapman J.C."/>
            <person name="Clamp M.E."/>
            <person name="Clark S.Y."/>
            <person name="Clarke G."/>
            <person name="Clee C.M."/>
            <person name="Clegg S.C."/>
            <person name="Cobley V."/>
            <person name="Collins J.E."/>
            <person name="Corby N."/>
            <person name="Coville G.J."/>
            <person name="Deloukas P."/>
            <person name="Dhami P."/>
            <person name="Dunham I."/>
            <person name="Dunn M."/>
            <person name="Earthrowl M.E."/>
            <person name="Ellington A.G."/>
            <person name="Faulkner L."/>
            <person name="Frankish A.G."/>
            <person name="Frankland J."/>
            <person name="French L."/>
            <person name="Garner P."/>
            <person name="Garnett J."/>
            <person name="Gilbert J.G.R."/>
            <person name="Gilson C.J."/>
            <person name="Ghori J."/>
            <person name="Grafham D.V."/>
            <person name="Gribble S.M."/>
            <person name="Griffiths C."/>
            <person name="Hall R.E."/>
            <person name="Hammond S."/>
            <person name="Harley J.L."/>
            <person name="Hart E.A."/>
            <person name="Heath P.D."/>
            <person name="Howden P.J."/>
            <person name="Huckle E.J."/>
            <person name="Hunt P.J."/>
            <person name="Hunt A.R."/>
            <person name="Johnson C."/>
            <person name="Johnson D."/>
            <person name="Kay M."/>
            <person name="Kimberley A.M."/>
            <person name="King A."/>
            <person name="Laird G.K."/>
            <person name="Langford C.J."/>
            <person name="Lawlor S."/>
            <person name="Leongamornlert D.A."/>
            <person name="Lloyd D.M."/>
            <person name="Lloyd C."/>
            <person name="Loveland J.E."/>
            <person name="Lovell J."/>
            <person name="Martin S."/>
            <person name="Mashreghi-Mohammadi M."/>
            <person name="McLaren S.J."/>
            <person name="McMurray A."/>
            <person name="Milne S."/>
            <person name="Moore M.J.F."/>
            <person name="Nickerson T."/>
            <person name="Palmer S.A."/>
            <person name="Pearce A.V."/>
            <person name="Peck A.I."/>
            <person name="Pelan S."/>
            <person name="Phillimore B."/>
            <person name="Porter K.M."/>
            <person name="Rice C.M."/>
            <person name="Searle S."/>
            <person name="Sehra H.K."/>
            <person name="Shownkeen R."/>
            <person name="Skuce C.D."/>
            <person name="Smith M."/>
            <person name="Steward C.A."/>
            <person name="Sycamore N."/>
            <person name="Tester J."/>
            <person name="Thomas D.W."/>
            <person name="Tracey A."/>
            <person name="Tromans A."/>
            <person name="Tubby B."/>
            <person name="Wall M."/>
            <person name="Wallis J.M."/>
            <person name="West A.P."/>
            <person name="Whitehead S.L."/>
            <person name="Willey D.L."/>
            <person name="Wilming L."/>
            <person name="Wray P.W."/>
            <person name="Wright M.W."/>
            <person name="Young L."/>
            <person name="Coulson A."/>
            <person name="Durbin R.M."/>
            <person name="Hubbard T."/>
            <person name="Sulston J.E."/>
            <person name="Beck S."/>
            <person name="Bentley D.R."/>
            <person name="Rogers J."/>
            <person name="Ross M.T."/>
        </authorList>
    </citation>
    <scope>NUCLEOTIDE SEQUENCE [LARGE SCALE GENOMIC DNA]</scope>
</reference>
<reference key="4">
    <citation type="journal article" date="2004" name="Genome Res.">
        <title>The status, quality, and expansion of the NIH full-length cDNA project: the Mammalian Gene Collection (MGC).</title>
        <authorList>
            <consortium name="The MGC Project Team"/>
        </authorList>
    </citation>
    <scope>NUCLEOTIDE SEQUENCE [LARGE SCALE MRNA]</scope>
    <scope>VARIANT VAL-195</scope>
</reference>
<sequence>MFSFKVSRWMGLACFRSLAASSPSIRQKKLMHKLQEEKAFREEMKIFREKIEDFREEMWTFRGKIHAFRGQILGFWEEERPFWEEEKTFWKEEKSFWEMEKSFREEEKTFWKKYRTFWKEDKAFWKEDNALWERDRNLLQEDKALWEEEKALWVEERALLEGEKALWEDKTSLWEEENALWEEERAFWMENNGHIAGEQMLEDGPHNANRGQRLLAFSRGRA</sequence>
<accession>Q6NSX1</accession>
<accession>Q8N7A8</accession>
<accession>Q9H097</accession>
<proteinExistence type="evidence at protein level"/>
<comment type="interaction">
    <interactant intactId="EBI-6873045">
        <id>Q6NSX1</id>
    </interactant>
    <interactant intactId="EBI-11522760">
        <id>Q6RW13-2</id>
        <label>AGTRAP</label>
    </interactant>
    <organismsDiffer>false</organismsDiffer>
    <experiments>3</experiments>
</comment>
<comment type="interaction">
    <interactant intactId="EBI-6873045">
        <id>Q6NSX1</id>
    </interactant>
    <interactant intactId="EBI-3922513">
        <id>O95393</id>
        <label>BMP10</label>
    </interactant>
    <organismsDiffer>false</organismsDiffer>
    <experiments>3</experiments>
</comment>
<comment type="interaction">
    <interactant intactId="EBI-6873045">
        <id>Q6NSX1</id>
    </interactant>
    <interactant intactId="EBI-10175124">
        <id>Q8IZU0</id>
        <label>FAM9B</label>
    </interactant>
    <organismsDiffer>false</organismsDiffer>
    <experiments>3</experiments>
</comment>
<comment type="interaction">
    <interactant intactId="EBI-6873045">
        <id>Q6NSX1</id>
    </interactant>
    <interactant intactId="EBI-743099">
        <id>Q969F0</id>
        <label>FATE1</label>
    </interactant>
    <organismsDiffer>false</organismsDiffer>
    <experiments>7</experiments>
</comment>
<comment type="interaction">
    <interactant intactId="EBI-6873045">
        <id>Q6NSX1</id>
    </interactant>
    <interactant intactId="EBI-618309">
        <id>Q08379</id>
        <label>GOLGA2</label>
    </interactant>
    <organismsDiffer>false</organismsDiffer>
    <experiments>3</experiments>
</comment>
<comment type="interaction">
    <interactant intactId="EBI-6873045">
        <id>Q6NSX1</id>
    </interactant>
    <interactant intactId="EBI-2211064">
        <id>Q14244</id>
        <label>MAP7</label>
    </interactant>
    <organismsDiffer>false</organismsDiffer>
    <experiments>3</experiments>
</comment>
<comment type="interaction">
    <interactant intactId="EBI-6873045">
        <id>Q6NSX1</id>
    </interactant>
    <interactant intactId="EBI-1567797">
        <id>Q8WWY3</id>
        <label>PRPF31</label>
    </interactant>
    <organismsDiffer>false</organismsDiffer>
    <experiments>3</experiments>
</comment>
<comment type="interaction">
    <interactant intactId="EBI-6873045">
        <id>Q6NSX1</id>
    </interactant>
    <interactant intactId="EBI-4402442">
        <id>Q4KMP7</id>
        <label>TBC1D10B</label>
    </interactant>
    <organismsDiffer>false</organismsDiffer>
    <experiments>3</experiments>
</comment>
<comment type="interaction">
    <interactant intactId="EBI-6873045">
        <id>Q6NSX1</id>
    </interactant>
    <interactant intactId="EBI-3923210">
        <id>Q8TDR4</id>
        <label>TCP10L</label>
    </interactant>
    <organismsDiffer>false</organismsDiffer>
    <experiments>3</experiments>
</comment>
<comment type="interaction">
    <interactant intactId="EBI-6873045">
        <id>Q6NSX1</id>
    </interactant>
    <interactant intactId="EBI-723946">
        <id>P17152</id>
        <label>TMEM11</label>
    </interactant>
    <organismsDiffer>false</organismsDiffer>
    <experiments>3</experiments>
</comment>
<comment type="interaction">
    <interactant intactId="EBI-6873045">
        <id>Q6NSX1</id>
    </interactant>
    <interactant intactId="EBI-359977">
        <id>P01375</id>
        <label>TNF</label>
    </interactant>
    <organismsDiffer>false</organismsDiffer>
    <experiments>3</experiments>
</comment>
<comment type="interaction">
    <interactant intactId="EBI-6873045">
        <id>Q6NSX1</id>
    </interactant>
    <interactant intactId="EBI-742842">
        <id>Q9NZ43</id>
        <label>USE1</label>
    </interactant>
    <organismsDiffer>false</organismsDiffer>
    <experiments>3</experiments>
</comment>
<feature type="chain" id="PRO_0000234432" description="Coiled-coil domain-containing protein 70">
    <location>
        <begin position="1"/>
        <end position="222"/>
    </location>
</feature>
<feature type="coiled-coil region" evidence="1">
    <location>
        <begin position="129"/>
        <end position="153"/>
    </location>
</feature>
<feature type="sequence variant" id="VAR_050763" description="In dbSNP:rs17076052.">
    <original>R</original>
    <variation>C</variation>
    <location>
        <position position="115"/>
    </location>
</feature>
<feature type="sequence variant" id="VAR_026238" description="In dbSNP:rs1054515." evidence="2 3 4">
    <original>I</original>
    <variation>V</variation>
    <location>
        <position position="195"/>
    </location>
</feature>
<feature type="sequence conflict" description="In Ref. 2; BAC05391." evidence="5" ref="2">
    <original>R</original>
    <variation>G</variation>
    <location>
        <position position="221"/>
    </location>
</feature>
<gene>
    <name evidence="6" type="primary">CCDC70</name>
</gene>